<organism>
    <name type="scientific">Pseudoalteromonas atlantica (strain T6c / ATCC BAA-1087)</name>
    <dbReference type="NCBI Taxonomy" id="3042615"/>
    <lineage>
        <taxon>Bacteria</taxon>
        <taxon>Pseudomonadati</taxon>
        <taxon>Pseudomonadota</taxon>
        <taxon>Gammaproteobacteria</taxon>
        <taxon>Alteromonadales</taxon>
        <taxon>Alteromonadaceae</taxon>
        <taxon>Paraglaciecola</taxon>
    </lineage>
</organism>
<gene>
    <name evidence="1" type="primary">glnS</name>
    <name type="ordered locus">Patl_2184</name>
</gene>
<dbReference type="EC" id="6.1.1.18" evidence="1"/>
<dbReference type="EMBL" id="CP000388">
    <property type="protein sequence ID" value="ABG40702.1"/>
    <property type="molecule type" value="Genomic_DNA"/>
</dbReference>
<dbReference type="RefSeq" id="WP_011574986.1">
    <property type="nucleotide sequence ID" value="NC_008228.1"/>
</dbReference>
<dbReference type="SMR" id="Q15TT6"/>
<dbReference type="STRING" id="342610.Patl_2184"/>
<dbReference type="KEGG" id="pat:Patl_2184"/>
<dbReference type="eggNOG" id="COG0008">
    <property type="taxonomic scope" value="Bacteria"/>
</dbReference>
<dbReference type="HOGENOM" id="CLU_001882_2_3_6"/>
<dbReference type="OrthoDB" id="9801560at2"/>
<dbReference type="Proteomes" id="UP000001981">
    <property type="component" value="Chromosome"/>
</dbReference>
<dbReference type="GO" id="GO:0005829">
    <property type="term" value="C:cytosol"/>
    <property type="evidence" value="ECO:0007669"/>
    <property type="project" value="TreeGrafter"/>
</dbReference>
<dbReference type="GO" id="GO:0005524">
    <property type="term" value="F:ATP binding"/>
    <property type="evidence" value="ECO:0007669"/>
    <property type="project" value="UniProtKB-UniRule"/>
</dbReference>
<dbReference type="GO" id="GO:0004819">
    <property type="term" value="F:glutamine-tRNA ligase activity"/>
    <property type="evidence" value="ECO:0007669"/>
    <property type="project" value="UniProtKB-UniRule"/>
</dbReference>
<dbReference type="GO" id="GO:0006425">
    <property type="term" value="P:glutaminyl-tRNA aminoacylation"/>
    <property type="evidence" value="ECO:0007669"/>
    <property type="project" value="InterPro"/>
</dbReference>
<dbReference type="GO" id="GO:0006424">
    <property type="term" value="P:glutamyl-tRNA aminoacylation"/>
    <property type="evidence" value="ECO:0007669"/>
    <property type="project" value="UniProtKB-UniRule"/>
</dbReference>
<dbReference type="CDD" id="cd00807">
    <property type="entry name" value="GlnRS_core"/>
    <property type="match status" value="1"/>
</dbReference>
<dbReference type="FunFam" id="2.40.240.10:FF:000001">
    <property type="entry name" value="Glutamine--tRNA ligase"/>
    <property type="match status" value="1"/>
</dbReference>
<dbReference type="FunFam" id="3.40.50.620:FF:000037">
    <property type="entry name" value="Glutamine--tRNA ligase cytoplasmic"/>
    <property type="match status" value="1"/>
</dbReference>
<dbReference type="Gene3D" id="3.40.50.620">
    <property type="entry name" value="HUPs"/>
    <property type="match status" value="1"/>
</dbReference>
<dbReference type="Gene3D" id="2.40.240.10">
    <property type="entry name" value="Ribosomal Protein L25, Chain P"/>
    <property type="match status" value="2"/>
</dbReference>
<dbReference type="HAMAP" id="MF_00126">
    <property type="entry name" value="Gln_tRNA_synth"/>
    <property type="match status" value="1"/>
</dbReference>
<dbReference type="InterPro" id="IPR001412">
    <property type="entry name" value="aa-tRNA-synth_I_CS"/>
</dbReference>
<dbReference type="InterPro" id="IPR004514">
    <property type="entry name" value="Gln-tRNA-synth"/>
</dbReference>
<dbReference type="InterPro" id="IPR050132">
    <property type="entry name" value="Gln/Glu-tRNA_Ligase"/>
</dbReference>
<dbReference type="InterPro" id="IPR022861">
    <property type="entry name" value="Gln_tRNA_ligase_bac"/>
</dbReference>
<dbReference type="InterPro" id="IPR000924">
    <property type="entry name" value="Glu/Gln-tRNA-synth"/>
</dbReference>
<dbReference type="InterPro" id="IPR020058">
    <property type="entry name" value="Glu/Gln-tRNA-synth_Ib_cat-dom"/>
</dbReference>
<dbReference type="InterPro" id="IPR020059">
    <property type="entry name" value="Glu/Gln-tRNA-synth_Ib_codon-bd"/>
</dbReference>
<dbReference type="InterPro" id="IPR020056">
    <property type="entry name" value="Rbsml_bL25/Gln-tRNA_synth_N"/>
</dbReference>
<dbReference type="InterPro" id="IPR011035">
    <property type="entry name" value="Ribosomal_bL25/Gln-tRNA_synth"/>
</dbReference>
<dbReference type="InterPro" id="IPR014729">
    <property type="entry name" value="Rossmann-like_a/b/a_fold"/>
</dbReference>
<dbReference type="InterPro" id="IPR049437">
    <property type="entry name" value="tRNA-synt_1c_C2"/>
</dbReference>
<dbReference type="NCBIfam" id="TIGR00440">
    <property type="entry name" value="glnS"/>
    <property type="match status" value="1"/>
</dbReference>
<dbReference type="NCBIfam" id="NF011291">
    <property type="entry name" value="PRK14703.1"/>
    <property type="match status" value="1"/>
</dbReference>
<dbReference type="PANTHER" id="PTHR43097:SF5">
    <property type="entry name" value="GLUTAMATE--TRNA LIGASE"/>
    <property type="match status" value="1"/>
</dbReference>
<dbReference type="PANTHER" id="PTHR43097">
    <property type="entry name" value="GLUTAMINE-TRNA LIGASE"/>
    <property type="match status" value="1"/>
</dbReference>
<dbReference type="Pfam" id="PF00749">
    <property type="entry name" value="tRNA-synt_1c"/>
    <property type="match status" value="1"/>
</dbReference>
<dbReference type="Pfam" id="PF03950">
    <property type="entry name" value="tRNA-synt_1c_C"/>
    <property type="match status" value="1"/>
</dbReference>
<dbReference type="Pfam" id="PF20974">
    <property type="entry name" value="tRNA-synt_1c_C2"/>
    <property type="match status" value="1"/>
</dbReference>
<dbReference type="PRINTS" id="PR00987">
    <property type="entry name" value="TRNASYNTHGLU"/>
</dbReference>
<dbReference type="SUPFAM" id="SSF52374">
    <property type="entry name" value="Nucleotidylyl transferase"/>
    <property type="match status" value="1"/>
</dbReference>
<dbReference type="SUPFAM" id="SSF50715">
    <property type="entry name" value="Ribosomal protein L25-like"/>
    <property type="match status" value="1"/>
</dbReference>
<dbReference type="PROSITE" id="PS00178">
    <property type="entry name" value="AA_TRNA_LIGASE_I"/>
    <property type="match status" value="1"/>
</dbReference>
<accession>Q15TT6</accession>
<comment type="catalytic activity">
    <reaction evidence="1">
        <text>tRNA(Gln) + L-glutamine + ATP = L-glutaminyl-tRNA(Gln) + AMP + diphosphate</text>
        <dbReference type="Rhea" id="RHEA:20121"/>
        <dbReference type="Rhea" id="RHEA-COMP:9662"/>
        <dbReference type="Rhea" id="RHEA-COMP:9681"/>
        <dbReference type="ChEBI" id="CHEBI:30616"/>
        <dbReference type="ChEBI" id="CHEBI:33019"/>
        <dbReference type="ChEBI" id="CHEBI:58359"/>
        <dbReference type="ChEBI" id="CHEBI:78442"/>
        <dbReference type="ChEBI" id="CHEBI:78521"/>
        <dbReference type="ChEBI" id="CHEBI:456215"/>
        <dbReference type="EC" id="6.1.1.18"/>
    </reaction>
</comment>
<comment type="subunit">
    <text evidence="1">Monomer.</text>
</comment>
<comment type="subcellular location">
    <subcellularLocation>
        <location evidence="1">Cytoplasm</location>
    </subcellularLocation>
</comment>
<comment type="similarity">
    <text evidence="1">Belongs to the class-I aminoacyl-tRNA synthetase family.</text>
</comment>
<reference key="1">
    <citation type="submission" date="2006-06" db="EMBL/GenBank/DDBJ databases">
        <title>Complete sequence of Pseudoalteromonas atlantica T6c.</title>
        <authorList>
            <consortium name="US DOE Joint Genome Institute"/>
            <person name="Copeland A."/>
            <person name="Lucas S."/>
            <person name="Lapidus A."/>
            <person name="Barry K."/>
            <person name="Detter J.C."/>
            <person name="Glavina del Rio T."/>
            <person name="Hammon N."/>
            <person name="Israni S."/>
            <person name="Dalin E."/>
            <person name="Tice H."/>
            <person name="Pitluck S."/>
            <person name="Saunders E."/>
            <person name="Brettin T."/>
            <person name="Bruce D."/>
            <person name="Han C."/>
            <person name="Tapia R."/>
            <person name="Gilna P."/>
            <person name="Schmutz J."/>
            <person name="Larimer F."/>
            <person name="Land M."/>
            <person name="Hauser L."/>
            <person name="Kyrpides N."/>
            <person name="Kim E."/>
            <person name="Karls A.C."/>
            <person name="Bartlett D."/>
            <person name="Higgins B.P."/>
            <person name="Richardson P."/>
        </authorList>
    </citation>
    <scope>NUCLEOTIDE SEQUENCE [LARGE SCALE GENOMIC DNA]</scope>
    <source>
        <strain>T6c / ATCC BAA-1087</strain>
    </source>
</reference>
<keyword id="KW-0030">Aminoacyl-tRNA synthetase</keyword>
<keyword id="KW-0067">ATP-binding</keyword>
<keyword id="KW-0963">Cytoplasm</keyword>
<keyword id="KW-0436">Ligase</keyword>
<keyword id="KW-0547">Nucleotide-binding</keyword>
<keyword id="KW-0648">Protein biosynthesis</keyword>
<sequence length="558" mass="64120">MAETESRPTNFIRQIIDKDLQSGLHKQIHTRFPPEPNGYLHIGHAKSICLNFGIAQDYQGQCNLRFDDTNPDKEDIDYVNAIKNDVIWLGFEWHGEARYSSNYFDQLHAYAVELIEKGLAYVDFSNQEQVREMRGTLTTPGTNSPYRDTSIEENIAQFAKMRNGEYKEGECLLRAKIDMSSPFMCMRDPALYRVKFAHHHQTGDKWCIYPMYDFTHCISDAIEGITHSLCTLEFQDNRRLYDWVLENVTIDVVPRQYEFSRLNLEYTVLSKRKLIQLVDEEFVSGWDDPRMPTIAGLRRRGFTAASIREFCKRIGVTKMDNMVEMSMLEAPLRDELNENAPRAMAVLEPVKIVIENYPQDGVELLAAPNHPNRPELGSREVPFAREIYIEAEDFREEANKKFKRLVLGKEVRLRNAYVIKAQRVEKDEQGNVTTIFCEYDGDTLGKDPADGRKVKGVIHWVSAAHAVAAEIRLYDSLFTVPNPAAEDDFVACINPESLTVKQGWVEPSLAKVDIDEANIQAFQFERTGYFCFDKDSTTSKLVFNRTVGLRDTWAKIGD</sequence>
<proteinExistence type="inferred from homology"/>
<feature type="chain" id="PRO_1000095499" description="Glutamine--tRNA ligase">
    <location>
        <begin position="1"/>
        <end position="558"/>
    </location>
</feature>
<feature type="short sequence motif" description="'HIGH' region" evidence="1">
    <location>
        <begin position="34"/>
        <end position="44"/>
    </location>
</feature>
<feature type="short sequence motif" description="'KMSKS' region" evidence="1">
    <location>
        <begin position="268"/>
        <end position="272"/>
    </location>
</feature>
<feature type="binding site" evidence="1">
    <location>
        <begin position="35"/>
        <end position="37"/>
    </location>
    <ligand>
        <name>ATP</name>
        <dbReference type="ChEBI" id="CHEBI:30616"/>
    </ligand>
</feature>
<feature type="binding site" evidence="1">
    <location>
        <begin position="41"/>
        <end position="47"/>
    </location>
    <ligand>
        <name>ATP</name>
        <dbReference type="ChEBI" id="CHEBI:30616"/>
    </ligand>
</feature>
<feature type="binding site" evidence="1">
    <location>
        <position position="67"/>
    </location>
    <ligand>
        <name>L-glutamine</name>
        <dbReference type="ChEBI" id="CHEBI:58359"/>
    </ligand>
</feature>
<feature type="binding site" evidence="1">
    <location>
        <position position="212"/>
    </location>
    <ligand>
        <name>L-glutamine</name>
        <dbReference type="ChEBI" id="CHEBI:58359"/>
    </ligand>
</feature>
<feature type="binding site" evidence="1">
    <location>
        <position position="231"/>
    </location>
    <ligand>
        <name>ATP</name>
        <dbReference type="ChEBI" id="CHEBI:30616"/>
    </ligand>
</feature>
<feature type="binding site" evidence="1">
    <location>
        <begin position="261"/>
        <end position="262"/>
    </location>
    <ligand>
        <name>ATP</name>
        <dbReference type="ChEBI" id="CHEBI:30616"/>
    </ligand>
</feature>
<feature type="binding site" evidence="1">
    <location>
        <begin position="269"/>
        <end position="271"/>
    </location>
    <ligand>
        <name>ATP</name>
        <dbReference type="ChEBI" id="CHEBI:30616"/>
    </ligand>
</feature>
<evidence type="ECO:0000255" key="1">
    <source>
        <dbReference type="HAMAP-Rule" id="MF_00126"/>
    </source>
</evidence>
<name>SYQ_PSEA6</name>
<protein>
    <recommendedName>
        <fullName evidence="1">Glutamine--tRNA ligase</fullName>
        <ecNumber evidence="1">6.1.1.18</ecNumber>
    </recommendedName>
    <alternativeName>
        <fullName evidence="1">Glutaminyl-tRNA synthetase</fullName>
        <shortName evidence="1">GlnRS</shortName>
    </alternativeName>
</protein>